<comment type="function">
    <text evidence="1">Plays a central role in chromosome condensation, segregation and cell cycle progression. Functions as a homodimer, which is essential for chromosome partition. Involved in negative DNA supercoiling in vivo, and by this means organize and compact chromosomes. May achieve or facilitate chromosome segregation by condensation DNA from both sides of a centrally located replisome during cell division.</text>
</comment>
<comment type="subunit">
    <text evidence="1">Homodimerization via its hinge domain. Binds to DNA via its C-terminal region. Interacts, and probably forms a ternary complex, with MukE and MukF via its C-terminal region. The complex formation is stimulated by calcium or magnesium. Interacts with tubulin-related protein FtsZ.</text>
</comment>
<comment type="subcellular location">
    <subcellularLocation>
        <location evidence="1">Cytoplasm</location>
        <location evidence="1">Nucleoid</location>
    </subcellularLocation>
    <text evidence="1">Restricted to the nucleoid region.</text>
</comment>
<comment type="domain">
    <text evidence="1">The hinge domain, which separates the large intramolecular coiled coil regions, allows the homodimerization, forming a V-shaped homodimer.</text>
</comment>
<comment type="similarity">
    <text evidence="1">Belongs to the SMC family. MukB subfamily.</text>
</comment>
<protein>
    <recommendedName>
        <fullName evidence="1">Chromosome partition protein MukB</fullName>
    </recommendedName>
    <alternativeName>
        <fullName evidence="1">Structural maintenance of chromosome-related protein</fullName>
    </alternativeName>
</protein>
<organism>
    <name type="scientific">Klebsiella pneumoniae</name>
    <dbReference type="NCBI Taxonomy" id="573"/>
    <lineage>
        <taxon>Bacteria</taxon>
        <taxon>Pseudomonadati</taxon>
        <taxon>Pseudomonadota</taxon>
        <taxon>Gammaproteobacteria</taxon>
        <taxon>Enterobacterales</taxon>
        <taxon>Enterobacteriaceae</taxon>
        <taxon>Klebsiella/Raoultella group</taxon>
        <taxon>Klebsiella</taxon>
        <taxon>Klebsiella pneumoniae complex</taxon>
    </lineage>
</organism>
<proteinExistence type="inferred from homology"/>
<accession>Q937H2</accession>
<evidence type="ECO:0000255" key="1">
    <source>
        <dbReference type="HAMAP-Rule" id="MF_01800"/>
    </source>
</evidence>
<name>MUKB_KLEPN</name>
<gene>
    <name evidence="1" type="primary">mukB</name>
</gene>
<sequence>MIERGKFRSLTLVNWNGFFARTFDLDELVTTLSGGNGAGKSTTMAAFVTALIPDLTLLHFRNTTEAGATSGSRDKGLHGKLRAGVCYSVLDVINSRHQRVVVGVRLQQVAGRDRKVDIKPFAIQGLPTSILPTQLLTETLNDRQARVVSLNELKDKLEAMEGVQFKQFNSITEYHSLMFDLGVVARRLRSASDRSKYYRLIEASLYGGISSTITRSLRDYLLPENSGVRKAFQDMEAALRENRMTLEAIRVTQSDRDLFKHLISEATNYVAADYMRHANERRIHLDKALEYRRDLFTSRSQLAAEQYKHVDMARELQEHNGAEGDLEADYQAASDHLNLVQTALRQQEKIERYEADLDELQIRLEEQNEVVAEAVDRQEENEARAEAAELEVDELKSQLADYQQALDVQQTRAIQYNQALQRWSAKALCHLPDLTPESADEWLETFQAKEQEATEKMLSLEQKMSVANRAHSQFEQAYQLVAAINGPWRANEAWDVAREFVRDGVNQRHQAEQAQGVRSRLNELEQRLREQQDAERQLAEFCKRQGKRYDIDDLETLHQELEARIASLADSVSNAQEQRMALRQELEQLQSRTQTLMRRAPVWLAAQNSLNQLCEQSGEQFASGQEVTEYLQQLLEREREAIVERDEVGRRKRAIDEEIERLSQPGGSEDPRLNALAERFGGVLLSEIYDDVSLDDAPYFSALYGPSRHAIVVPDLSRVAEQLEGLEDCPEDLYLIEGDPQSFDDSVFSVDELEKAVVVKIADIQWRYSRFPALPLFGRAARENRIETLHAERESLSERFGTLSFDVQKTQRLHQAFSRFIEQHLAVTFEDDPEEEIRKLKQARGELERTVSAHESDNQQNRVQYEQAKEGVTALNRILPRLNLLADDTLADRVDEIQERLDETQEARFIQQYGNELAKLEPIFRCCRANPEQFEQLKEDYAYAQQTQRDARQQAFALAEVVQRRAHFSYSDSAEMLSGNSDLNEKLRQRLEQAESERSRARDAMRAHAAQLSQYNQVLASLKSSYDTKKELLNDLYKELQDIGVRADAGKKRARARRHELHMQLSNNRSRRNQLEKALTFCEAEMDNLTRKLRKLERDYCEMREQVVTAKAGWCAVMRLVKDNGVERRLHRRELAYLSADELRSMSDKALGALRLAVADNEHLRDVLRISEDPKRPERKIQFFVAVYQHLRERIRQDIIRTDDPVEAIEQMEIELSRLTEELTNREQKLAISSRSVANIIRKTIQREQNRIRMLNQGLQSVSFGQVNSVRLNVNVRETHSMLLDVLSEQHEQHQDLFNSNRLTFSEALAKLYQRLNPQIDMGQRTPQTIGEELLDYRNYLEMEVEVNRGSDGWLRAESGALSTGEAIGTGMSILVMVVQSWEDESRRLRGKDISPCRLLFLDEAARLDARSIATLFELCERLEMQLIIAAPENISPEKGTTYKLVRKVFNNHEHVHVVGLRGFDAPLPEALPGTADAS</sequence>
<dbReference type="EMBL" id="AJ417691">
    <property type="protein sequence ID" value="CAD10421.1"/>
    <property type="molecule type" value="Genomic_DNA"/>
</dbReference>
<dbReference type="SMR" id="Q937H2"/>
<dbReference type="GO" id="GO:0005737">
    <property type="term" value="C:cytoplasm"/>
    <property type="evidence" value="ECO:0007669"/>
    <property type="project" value="UniProtKB-UniRule"/>
</dbReference>
<dbReference type="GO" id="GO:0009295">
    <property type="term" value="C:nucleoid"/>
    <property type="evidence" value="ECO:0007669"/>
    <property type="project" value="UniProtKB-SubCell"/>
</dbReference>
<dbReference type="GO" id="GO:0005524">
    <property type="term" value="F:ATP binding"/>
    <property type="evidence" value="ECO:0007669"/>
    <property type="project" value="UniProtKB-UniRule"/>
</dbReference>
<dbReference type="GO" id="GO:0003677">
    <property type="term" value="F:DNA binding"/>
    <property type="evidence" value="ECO:0007669"/>
    <property type="project" value="UniProtKB-UniRule"/>
</dbReference>
<dbReference type="GO" id="GO:0051301">
    <property type="term" value="P:cell division"/>
    <property type="evidence" value="ECO:0007669"/>
    <property type="project" value="UniProtKB-KW"/>
</dbReference>
<dbReference type="GO" id="GO:0030261">
    <property type="term" value="P:chromosome condensation"/>
    <property type="evidence" value="ECO:0007669"/>
    <property type="project" value="UniProtKB-KW"/>
</dbReference>
<dbReference type="GO" id="GO:0007059">
    <property type="term" value="P:chromosome segregation"/>
    <property type="evidence" value="ECO:0007669"/>
    <property type="project" value="UniProtKB-UniRule"/>
</dbReference>
<dbReference type="GO" id="GO:0006260">
    <property type="term" value="P:DNA replication"/>
    <property type="evidence" value="ECO:0007669"/>
    <property type="project" value="UniProtKB-UniRule"/>
</dbReference>
<dbReference type="FunFam" id="3.30.70.3500:FF:000001">
    <property type="entry name" value="Chromosome partition protein MukB"/>
    <property type="match status" value="1"/>
</dbReference>
<dbReference type="FunFam" id="3.40.1140.10:FF:000001">
    <property type="entry name" value="Chromosome partition protein MukB"/>
    <property type="match status" value="1"/>
</dbReference>
<dbReference type="FunFam" id="3.40.1140.10:FF:000002">
    <property type="entry name" value="Chromosome partition protein MukB"/>
    <property type="match status" value="1"/>
</dbReference>
<dbReference type="Gene3D" id="1.20.58.850">
    <property type="match status" value="1"/>
</dbReference>
<dbReference type="Gene3D" id="3.40.1140.10">
    <property type="match status" value="2"/>
</dbReference>
<dbReference type="Gene3D" id="1.20.5.420">
    <property type="entry name" value="Immunoglobulin FC, subunit C"/>
    <property type="match status" value="1"/>
</dbReference>
<dbReference type="Gene3D" id="3.30.70.3500">
    <property type="entry name" value="MukB, hinge domain"/>
    <property type="match status" value="1"/>
</dbReference>
<dbReference type="HAMAP" id="MF_01800">
    <property type="entry name" value="MukB"/>
    <property type="match status" value="1"/>
</dbReference>
<dbReference type="InterPro" id="IPR012090">
    <property type="entry name" value="MukB"/>
</dbReference>
<dbReference type="InterPro" id="IPR050308">
    <property type="entry name" value="MukB/SMC"/>
</dbReference>
<dbReference type="InterPro" id="IPR032520">
    <property type="entry name" value="MukB_hinge"/>
</dbReference>
<dbReference type="InterPro" id="IPR042501">
    <property type="entry name" value="MukB_hinge_sf"/>
</dbReference>
<dbReference type="InterPro" id="IPR007406">
    <property type="entry name" value="MukB_N_dom"/>
</dbReference>
<dbReference type="InterPro" id="IPR027417">
    <property type="entry name" value="P-loop_NTPase"/>
</dbReference>
<dbReference type="NCBIfam" id="NF003422">
    <property type="entry name" value="PRK04863.1"/>
    <property type="match status" value="1"/>
</dbReference>
<dbReference type="PANTHER" id="PTHR42963">
    <property type="entry name" value="CHROMOSOME PARTITION PROTEIN MUKB"/>
    <property type="match status" value="1"/>
</dbReference>
<dbReference type="PANTHER" id="PTHR42963:SF1">
    <property type="entry name" value="DUF4476 DOMAIN-CONTAINING PROTEIN"/>
    <property type="match status" value="1"/>
</dbReference>
<dbReference type="Pfam" id="PF04310">
    <property type="entry name" value="MukB"/>
    <property type="match status" value="1"/>
</dbReference>
<dbReference type="Pfam" id="PF16330">
    <property type="entry name" value="MukB_hinge"/>
    <property type="match status" value="1"/>
</dbReference>
<dbReference type="Pfam" id="PF13558">
    <property type="entry name" value="SbcC_Walker_B"/>
    <property type="match status" value="1"/>
</dbReference>
<dbReference type="PIRSF" id="PIRSF005246">
    <property type="entry name" value="MukB"/>
    <property type="match status" value="1"/>
</dbReference>
<dbReference type="SUPFAM" id="SSF52540">
    <property type="entry name" value="P-loop containing nucleoside triphosphate hydrolases"/>
    <property type="match status" value="2"/>
</dbReference>
<reference key="1">
    <citation type="journal article" date="2004" name="Mol. Biol. Evol.">
        <title>The evolution of SMC proteins: phylogenetic analysis and structural implications.</title>
        <authorList>
            <person name="Cobbe N."/>
            <person name="Heck M.M.S."/>
        </authorList>
    </citation>
    <scope>NUCLEOTIDE SEQUENCE [GENOMIC DNA]</scope>
</reference>
<keyword id="KW-0067">ATP-binding</keyword>
<keyword id="KW-0131">Cell cycle</keyword>
<keyword id="KW-0132">Cell division</keyword>
<keyword id="KW-0159">Chromosome partition</keyword>
<keyword id="KW-0175">Coiled coil</keyword>
<keyword id="KW-0963">Cytoplasm</keyword>
<keyword id="KW-0226">DNA condensation</keyword>
<keyword id="KW-0238">DNA-binding</keyword>
<keyword id="KW-0547">Nucleotide-binding</keyword>
<feature type="chain" id="PRO_0000068221" description="Chromosome partition protein MukB">
    <location>
        <begin position="1"/>
        <end position="1479"/>
    </location>
</feature>
<feature type="region of interest" description="Flexible hinge" evidence="1">
    <location>
        <begin position="665"/>
        <end position="782"/>
    </location>
</feature>
<feature type="coiled-coil region" evidence="1">
    <location>
        <begin position="138"/>
        <end position="163"/>
    </location>
</feature>
<feature type="coiled-coil region" evidence="1">
    <location>
        <begin position="331"/>
        <end position="664"/>
    </location>
</feature>
<feature type="coiled-coil region" evidence="1">
    <location>
        <begin position="831"/>
        <end position="1112"/>
    </location>
</feature>
<feature type="coiled-coil region" evidence="1">
    <location>
        <begin position="1206"/>
        <end position="1257"/>
    </location>
</feature>
<feature type="binding site" evidence="1">
    <location>
        <begin position="34"/>
        <end position="41"/>
    </location>
    <ligand>
        <name>ATP</name>
        <dbReference type="ChEBI" id="CHEBI:30616"/>
    </ligand>
</feature>